<name>YCF46_TRICV</name>
<geneLocation type="chloroplast"/>
<evidence type="ECO:0000255" key="1"/>
<evidence type="ECO:0000305" key="2"/>
<accession>P49541</accession>
<feature type="chain" id="PRO_0000084803" description="Uncharacterized AAA domain-containing protein ycf46">
    <location>
        <begin position="1"/>
        <end position="497"/>
    </location>
</feature>
<feature type="binding site" evidence="1">
    <location>
        <begin position="266"/>
        <end position="273"/>
    </location>
    <ligand>
        <name>ATP</name>
        <dbReference type="ChEBI" id="CHEBI:30616"/>
    </ligand>
</feature>
<dbReference type="EMBL" id="Z67753">
    <property type="protein sequence ID" value="CAA91659.1"/>
    <property type="molecule type" value="Genomic_DNA"/>
</dbReference>
<dbReference type="PIR" id="S78286">
    <property type="entry name" value="S78286"/>
</dbReference>
<dbReference type="RefSeq" id="NP_043627.1">
    <property type="nucleotide sequence ID" value="NC_001713.1"/>
</dbReference>
<dbReference type="SMR" id="P49541"/>
<dbReference type="GeneID" id="801725"/>
<dbReference type="GO" id="GO:0009507">
    <property type="term" value="C:chloroplast"/>
    <property type="evidence" value="ECO:0007669"/>
    <property type="project" value="UniProtKB-SubCell"/>
</dbReference>
<dbReference type="GO" id="GO:0005524">
    <property type="term" value="F:ATP binding"/>
    <property type="evidence" value="ECO:0007669"/>
    <property type="project" value="UniProtKB-KW"/>
</dbReference>
<dbReference type="GO" id="GO:0016887">
    <property type="term" value="F:ATP hydrolysis activity"/>
    <property type="evidence" value="ECO:0007669"/>
    <property type="project" value="InterPro"/>
</dbReference>
<dbReference type="CDD" id="cd19507">
    <property type="entry name" value="RecA-like_Ycf46-like"/>
    <property type="match status" value="1"/>
</dbReference>
<dbReference type="Gene3D" id="1.10.8.60">
    <property type="match status" value="1"/>
</dbReference>
<dbReference type="Gene3D" id="3.40.50.300">
    <property type="entry name" value="P-loop containing nucleotide triphosphate hydrolases"/>
    <property type="match status" value="1"/>
</dbReference>
<dbReference type="InterPro" id="IPR003593">
    <property type="entry name" value="AAA+_ATPase"/>
</dbReference>
<dbReference type="InterPro" id="IPR052381">
    <property type="entry name" value="AAA_domain_protein"/>
</dbReference>
<dbReference type="InterPro" id="IPR003959">
    <property type="entry name" value="ATPase_AAA_core"/>
</dbReference>
<dbReference type="InterPro" id="IPR027417">
    <property type="entry name" value="P-loop_NTPase"/>
</dbReference>
<dbReference type="PANTHER" id="PTHR42960">
    <property type="entry name" value="YCF46 PROTEIN"/>
    <property type="match status" value="1"/>
</dbReference>
<dbReference type="PANTHER" id="PTHR42960:SF1">
    <property type="entry name" value="YCF46 PROTEIN"/>
    <property type="match status" value="1"/>
</dbReference>
<dbReference type="Pfam" id="PF00004">
    <property type="entry name" value="AAA"/>
    <property type="match status" value="1"/>
</dbReference>
<dbReference type="SMART" id="SM00382">
    <property type="entry name" value="AAA"/>
    <property type="match status" value="1"/>
</dbReference>
<dbReference type="SUPFAM" id="SSF52540">
    <property type="entry name" value="P-loop containing nucleoside triphosphate hydrolases"/>
    <property type="match status" value="2"/>
</dbReference>
<proteinExistence type="inferred from homology"/>
<reference key="1">
    <citation type="journal article" date="1995" name="Plant Mol. Biol. Rep.">
        <title>The chloroplast genome of a chlorophyll a+c-containing alga, Odontella sinensis.</title>
        <authorList>
            <person name="Kowallik K.V."/>
            <person name="Stoebe B."/>
            <person name="Schaffran I."/>
            <person name="Kroth-Pancic P."/>
            <person name="Freier U."/>
        </authorList>
    </citation>
    <scope>NUCLEOTIDE SEQUENCE [LARGE SCALE GENOMIC DNA]</scope>
</reference>
<organism>
    <name type="scientific">Trieres chinensis</name>
    <name type="common">Marine centric diatom</name>
    <name type="synonym">Odontella sinensis</name>
    <dbReference type="NCBI Taxonomy" id="1514140"/>
    <lineage>
        <taxon>Eukaryota</taxon>
        <taxon>Sar</taxon>
        <taxon>Stramenopiles</taxon>
        <taxon>Ochrophyta</taxon>
        <taxon>Bacillariophyta</taxon>
        <taxon>Mediophyceae</taxon>
        <taxon>Biddulphiophycidae</taxon>
        <taxon>Eupodiscales</taxon>
        <taxon>Parodontellaceae</taxon>
        <taxon>Trieres</taxon>
    </lineage>
</organism>
<keyword id="KW-0067">ATP-binding</keyword>
<keyword id="KW-0150">Chloroplast</keyword>
<keyword id="KW-0547">Nucleotide-binding</keyword>
<keyword id="KW-0934">Plastid</keyword>
<comment type="subcellular location">
    <subcellularLocation>
        <location>Plastid</location>
        <location>Chloroplast</location>
    </subcellularLocation>
</comment>
<comment type="similarity">
    <text evidence="2">Belongs to the AAA ATPase family. Highly divergent.</text>
</comment>
<sequence>MKFNDELILLLKARYPIIYINTIEEDRVEYIIRKHIKANLNRSIYSWDFVDGYTNNPNNEGFAKRNPLQALELIERLTSETPALFLLKDFNRFLTDISISRKLKNVSRILKLQPKTIIIIGSDFQIPKELQDLITVLQFNLPVENEITQELTRLVNSLNLTIDPSLFESLTRACQGLSLERIRRVLSKIIATHKTIDENSISILLSEKKQIISQTEILEYWSVNEKMGNIGGVDNLKDWLKKRKTSFTIQASNYGLPTPRGLLLIGIQGTGKSLTAKAIATEWQLPLLKLDVGRLFGGIVGESESRLRQMIDVAETLSPCILWIDEMDKAFSNNDSRGDSGTSNRVLATFISWLSEKTKPVFVVATANNVDLLPLEIIRKGRFDEIFFLDLPELEERKEIFKIHIQEFRPNSWKLFDYKKLAQLSESFSGAEIRQSIIEAMYQAFDQQREFTTDDICLALKQLIPLAQLENSQTLKLQSWASSGRIRLASSKRISIN</sequence>
<protein>
    <recommendedName>
        <fullName>Uncharacterized AAA domain-containing protein ycf46</fullName>
    </recommendedName>
</protein>
<gene>
    <name type="primary">ycf46</name>
</gene>